<comment type="function">
    <text evidence="1">This protein is located at the 30S-50S ribosomal subunit interface and may play a role in the structure and function of the aminoacyl-tRNA binding site.</text>
</comment>
<comment type="similarity">
    <text evidence="1">Belongs to the bacterial ribosomal protein bL19 family.</text>
</comment>
<keyword id="KW-0687">Ribonucleoprotein</keyword>
<keyword id="KW-0689">Ribosomal protein</keyword>
<gene>
    <name evidence="1" type="primary">rplS</name>
    <name type="ordered locus">SpyM51253</name>
</gene>
<proteinExistence type="inferred from homology"/>
<reference key="1">
    <citation type="journal article" date="2007" name="J. Bacteriol.">
        <title>Complete genome of acute rheumatic fever-associated serotype M5 Streptococcus pyogenes strain Manfredo.</title>
        <authorList>
            <person name="Holden M.T.G."/>
            <person name="Scott A."/>
            <person name="Cherevach I."/>
            <person name="Chillingworth T."/>
            <person name="Churcher C."/>
            <person name="Cronin A."/>
            <person name="Dowd L."/>
            <person name="Feltwell T."/>
            <person name="Hamlin N."/>
            <person name="Holroyd S."/>
            <person name="Jagels K."/>
            <person name="Moule S."/>
            <person name="Mungall K."/>
            <person name="Quail M.A."/>
            <person name="Price C."/>
            <person name="Rabbinowitsch E."/>
            <person name="Sharp S."/>
            <person name="Skelton J."/>
            <person name="Whitehead S."/>
            <person name="Barrell B.G."/>
            <person name="Kehoe M."/>
            <person name="Parkhill J."/>
        </authorList>
    </citation>
    <scope>NUCLEOTIDE SEQUENCE [LARGE SCALE GENOMIC DNA]</scope>
    <source>
        <strain>Manfredo</strain>
    </source>
</reference>
<organism>
    <name type="scientific">Streptococcus pyogenes serotype M5 (strain Manfredo)</name>
    <dbReference type="NCBI Taxonomy" id="160491"/>
    <lineage>
        <taxon>Bacteria</taxon>
        <taxon>Bacillati</taxon>
        <taxon>Bacillota</taxon>
        <taxon>Bacilli</taxon>
        <taxon>Lactobacillales</taxon>
        <taxon>Streptococcaceae</taxon>
        <taxon>Streptococcus</taxon>
    </lineage>
</organism>
<evidence type="ECO:0000255" key="1">
    <source>
        <dbReference type="HAMAP-Rule" id="MF_00402"/>
    </source>
</evidence>
<evidence type="ECO:0000305" key="2"/>
<sequence length="115" mass="13145">MNPLIQSLTEGQLRSDIPNFRPGDTVRVHAKVVEGTRERIQIFEGVVISRKGQGISEMYTVRKISGGIGVERTFPIHTPRVDKIEVIRHGKVRRAKLYYLRALQGKAARIKEIRR</sequence>
<dbReference type="EMBL" id="AM295007">
    <property type="protein sequence ID" value="CAM30578.1"/>
    <property type="molecule type" value="Genomic_DNA"/>
</dbReference>
<dbReference type="RefSeq" id="WP_002985298.1">
    <property type="nucleotide sequence ID" value="NC_009332.1"/>
</dbReference>
<dbReference type="SMR" id="A2RFE9"/>
<dbReference type="GeneID" id="69901140"/>
<dbReference type="KEGG" id="spf:SpyM51253"/>
<dbReference type="HOGENOM" id="CLU_103507_2_1_9"/>
<dbReference type="GO" id="GO:0022625">
    <property type="term" value="C:cytosolic large ribosomal subunit"/>
    <property type="evidence" value="ECO:0007669"/>
    <property type="project" value="TreeGrafter"/>
</dbReference>
<dbReference type="GO" id="GO:0003735">
    <property type="term" value="F:structural constituent of ribosome"/>
    <property type="evidence" value="ECO:0007669"/>
    <property type="project" value="InterPro"/>
</dbReference>
<dbReference type="GO" id="GO:0006412">
    <property type="term" value="P:translation"/>
    <property type="evidence" value="ECO:0007669"/>
    <property type="project" value="UniProtKB-UniRule"/>
</dbReference>
<dbReference type="FunFam" id="2.30.30.790:FF:000001">
    <property type="entry name" value="50S ribosomal protein L19"/>
    <property type="match status" value="1"/>
</dbReference>
<dbReference type="Gene3D" id="2.30.30.790">
    <property type="match status" value="1"/>
</dbReference>
<dbReference type="HAMAP" id="MF_00402">
    <property type="entry name" value="Ribosomal_bL19"/>
    <property type="match status" value="1"/>
</dbReference>
<dbReference type="InterPro" id="IPR001857">
    <property type="entry name" value="Ribosomal_bL19"/>
</dbReference>
<dbReference type="InterPro" id="IPR018257">
    <property type="entry name" value="Ribosomal_bL19_CS"/>
</dbReference>
<dbReference type="InterPro" id="IPR038657">
    <property type="entry name" value="Ribosomal_bL19_sf"/>
</dbReference>
<dbReference type="InterPro" id="IPR008991">
    <property type="entry name" value="Translation_prot_SH3-like_sf"/>
</dbReference>
<dbReference type="NCBIfam" id="TIGR01024">
    <property type="entry name" value="rplS_bact"/>
    <property type="match status" value="1"/>
</dbReference>
<dbReference type="PANTHER" id="PTHR15680:SF9">
    <property type="entry name" value="LARGE RIBOSOMAL SUBUNIT PROTEIN BL19M"/>
    <property type="match status" value="1"/>
</dbReference>
<dbReference type="PANTHER" id="PTHR15680">
    <property type="entry name" value="RIBOSOMAL PROTEIN L19"/>
    <property type="match status" value="1"/>
</dbReference>
<dbReference type="Pfam" id="PF01245">
    <property type="entry name" value="Ribosomal_L19"/>
    <property type="match status" value="1"/>
</dbReference>
<dbReference type="PIRSF" id="PIRSF002191">
    <property type="entry name" value="Ribosomal_L19"/>
    <property type="match status" value="1"/>
</dbReference>
<dbReference type="PRINTS" id="PR00061">
    <property type="entry name" value="RIBOSOMALL19"/>
</dbReference>
<dbReference type="SUPFAM" id="SSF50104">
    <property type="entry name" value="Translation proteins SH3-like domain"/>
    <property type="match status" value="1"/>
</dbReference>
<dbReference type="PROSITE" id="PS01015">
    <property type="entry name" value="RIBOSOMAL_L19"/>
    <property type="match status" value="1"/>
</dbReference>
<accession>A2RFE9</accession>
<name>RL19_STRPG</name>
<feature type="chain" id="PRO_1000049753" description="Large ribosomal subunit protein bL19">
    <location>
        <begin position="1"/>
        <end position="115"/>
    </location>
</feature>
<protein>
    <recommendedName>
        <fullName evidence="1">Large ribosomal subunit protein bL19</fullName>
    </recommendedName>
    <alternativeName>
        <fullName evidence="2">50S ribosomal protein L19</fullName>
    </alternativeName>
</protein>